<gene>
    <name evidence="1" type="primary">accD</name>
    <name type="ordered locus">M28_Spy1474</name>
</gene>
<feature type="chain" id="PRO_0000389878" description="Acetyl-coenzyme A carboxylase carboxyl transferase subunit beta">
    <location>
        <begin position="1"/>
        <end position="288"/>
    </location>
</feature>
<feature type="domain" description="CoA carboxyltransferase N-terminal" evidence="2">
    <location>
        <begin position="34"/>
        <end position="288"/>
    </location>
</feature>
<feature type="zinc finger region" description="C4-type" evidence="1">
    <location>
        <begin position="38"/>
        <end position="59"/>
    </location>
</feature>
<feature type="binding site" evidence="1">
    <location>
        <position position="38"/>
    </location>
    <ligand>
        <name>Zn(2+)</name>
        <dbReference type="ChEBI" id="CHEBI:29105"/>
    </ligand>
</feature>
<feature type="binding site" evidence="1">
    <location>
        <position position="41"/>
    </location>
    <ligand>
        <name>Zn(2+)</name>
        <dbReference type="ChEBI" id="CHEBI:29105"/>
    </ligand>
</feature>
<feature type="binding site" evidence="1">
    <location>
        <position position="56"/>
    </location>
    <ligand>
        <name>Zn(2+)</name>
        <dbReference type="ChEBI" id="CHEBI:29105"/>
    </ligand>
</feature>
<feature type="binding site" evidence="1">
    <location>
        <position position="59"/>
    </location>
    <ligand>
        <name>Zn(2+)</name>
        <dbReference type="ChEBI" id="CHEBI:29105"/>
    </ligand>
</feature>
<dbReference type="EC" id="2.1.3.15" evidence="1"/>
<dbReference type="EMBL" id="CP000056">
    <property type="protein sequence ID" value="AAX72584.1"/>
    <property type="molecule type" value="Genomic_DNA"/>
</dbReference>
<dbReference type="RefSeq" id="WP_011285088.1">
    <property type="nucleotide sequence ID" value="NC_007296.2"/>
</dbReference>
<dbReference type="SMR" id="Q48RS6"/>
<dbReference type="KEGG" id="spb:M28_Spy1474"/>
<dbReference type="HOGENOM" id="CLU_015486_1_1_9"/>
<dbReference type="UniPathway" id="UPA00655">
    <property type="reaction ID" value="UER00711"/>
</dbReference>
<dbReference type="GO" id="GO:0009317">
    <property type="term" value="C:acetyl-CoA carboxylase complex"/>
    <property type="evidence" value="ECO:0007669"/>
    <property type="project" value="InterPro"/>
</dbReference>
<dbReference type="GO" id="GO:0003989">
    <property type="term" value="F:acetyl-CoA carboxylase activity"/>
    <property type="evidence" value="ECO:0007669"/>
    <property type="project" value="InterPro"/>
</dbReference>
<dbReference type="GO" id="GO:0005524">
    <property type="term" value="F:ATP binding"/>
    <property type="evidence" value="ECO:0007669"/>
    <property type="project" value="UniProtKB-KW"/>
</dbReference>
<dbReference type="GO" id="GO:0016743">
    <property type="term" value="F:carboxyl- or carbamoyltransferase activity"/>
    <property type="evidence" value="ECO:0007669"/>
    <property type="project" value="UniProtKB-UniRule"/>
</dbReference>
<dbReference type="GO" id="GO:0008270">
    <property type="term" value="F:zinc ion binding"/>
    <property type="evidence" value="ECO:0007669"/>
    <property type="project" value="UniProtKB-UniRule"/>
</dbReference>
<dbReference type="GO" id="GO:0006633">
    <property type="term" value="P:fatty acid biosynthetic process"/>
    <property type="evidence" value="ECO:0007669"/>
    <property type="project" value="UniProtKB-KW"/>
</dbReference>
<dbReference type="GO" id="GO:2001295">
    <property type="term" value="P:malonyl-CoA biosynthetic process"/>
    <property type="evidence" value="ECO:0007669"/>
    <property type="project" value="UniProtKB-UniRule"/>
</dbReference>
<dbReference type="Gene3D" id="3.90.226.10">
    <property type="entry name" value="2-enoyl-CoA Hydratase, Chain A, domain 1"/>
    <property type="match status" value="1"/>
</dbReference>
<dbReference type="HAMAP" id="MF_01395">
    <property type="entry name" value="AcetylCoA_CT_beta"/>
    <property type="match status" value="1"/>
</dbReference>
<dbReference type="InterPro" id="IPR034733">
    <property type="entry name" value="AcCoA_carboxyl_beta"/>
</dbReference>
<dbReference type="InterPro" id="IPR000438">
    <property type="entry name" value="Acetyl_CoA_COase_Trfase_b_su"/>
</dbReference>
<dbReference type="InterPro" id="IPR029045">
    <property type="entry name" value="ClpP/crotonase-like_dom_sf"/>
</dbReference>
<dbReference type="InterPro" id="IPR011762">
    <property type="entry name" value="COA_CT_N"/>
</dbReference>
<dbReference type="NCBIfam" id="TIGR00515">
    <property type="entry name" value="accD"/>
    <property type="match status" value="1"/>
</dbReference>
<dbReference type="PANTHER" id="PTHR42995">
    <property type="entry name" value="ACETYL-COENZYME A CARBOXYLASE CARBOXYL TRANSFERASE SUBUNIT BETA, CHLOROPLASTIC"/>
    <property type="match status" value="1"/>
</dbReference>
<dbReference type="PANTHER" id="PTHR42995:SF5">
    <property type="entry name" value="ACETYL-COENZYME A CARBOXYLASE CARBOXYL TRANSFERASE SUBUNIT BETA, CHLOROPLASTIC"/>
    <property type="match status" value="1"/>
</dbReference>
<dbReference type="Pfam" id="PF01039">
    <property type="entry name" value="Carboxyl_trans"/>
    <property type="match status" value="1"/>
</dbReference>
<dbReference type="PRINTS" id="PR01070">
    <property type="entry name" value="ACCCTRFRASEB"/>
</dbReference>
<dbReference type="SUPFAM" id="SSF52096">
    <property type="entry name" value="ClpP/crotonase"/>
    <property type="match status" value="1"/>
</dbReference>
<dbReference type="PROSITE" id="PS50980">
    <property type="entry name" value="COA_CT_NTER"/>
    <property type="match status" value="1"/>
</dbReference>
<name>ACCD_STRPM</name>
<protein>
    <recommendedName>
        <fullName evidence="1">Acetyl-coenzyme A carboxylase carboxyl transferase subunit beta</fullName>
        <shortName evidence="1">ACCase subunit beta</shortName>
        <shortName evidence="1">Acetyl-CoA carboxylase carboxyltransferase subunit beta</shortName>
        <ecNumber evidence="1">2.1.3.15</ecNumber>
    </recommendedName>
</protein>
<sequence length="288" mass="31682">MALFRKKDKYIRITPNNSLKGSVSHNVPEVPDELFAKCPACKHMIYKKDLGLAKICPTCSYNFRISAQERLTLTVDEGSFQELFTSIETKDPLRFPGYQEKLQKAKETTGLHEAVLTGKAMVKGQQIALAIMDSHFIMASMGTVVGEKITRLFELAIEENLPVVIFTASGGARMQEGIMSLMQMAKVSAAVKRHSNAGLFYLTILTDPTTGGVTASFAMGGDIILAEPQSLVGFAGRRVIETTVRENLPDDFQKAEFLQDHGFVDAIVKRTELRDKIAHLVAFHGGGQ</sequence>
<proteinExistence type="inferred from homology"/>
<organism>
    <name type="scientific">Streptococcus pyogenes serotype M28 (strain MGAS6180)</name>
    <dbReference type="NCBI Taxonomy" id="319701"/>
    <lineage>
        <taxon>Bacteria</taxon>
        <taxon>Bacillati</taxon>
        <taxon>Bacillota</taxon>
        <taxon>Bacilli</taxon>
        <taxon>Lactobacillales</taxon>
        <taxon>Streptococcaceae</taxon>
        <taxon>Streptococcus</taxon>
    </lineage>
</organism>
<accession>Q48RS6</accession>
<keyword id="KW-0067">ATP-binding</keyword>
<keyword id="KW-0963">Cytoplasm</keyword>
<keyword id="KW-0275">Fatty acid biosynthesis</keyword>
<keyword id="KW-0276">Fatty acid metabolism</keyword>
<keyword id="KW-0444">Lipid biosynthesis</keyword>
<keyword id="KW-0443">Lipid metabolism</keyword>
<keyword id="KW-0479">Metal-binding</keyword>
<keyword id="KW-0547">Nucleotide-binding</keyword>
<keyword id="KW-0808">Transferase</keyword>
<keyword id="KW-0862">Zinc</keyword>
<keyword id="KW-0863">Zinc-finger</keyword>
<reference key="1">
    <citation type="journal article" date="2005" name="J. Infect. Dis.">
        <title>Genome sequence of a serotype M28 strain of group A Streptococcus: potential new insights into puerperal sepsis and bacterial disease specificity.</title>
        <authorList>
            <person name="Green N.M."/>
            <person name="Zhang S."/>
            <person name="Porcella S.F."/>
            <person name="Nagiec M.J."/>
            <person name="Barbian K.D."/>
            <person name="Beres S.B."/>
            <person name="Lefebvre R.B."/>
            <person name="Musser J.M."/>
        </authorList>
    </citation>
    <scope>NUCLEOTIDE SEQUENCE [LARGE SCALE GENOMIC DNA]</scope>
    <source>
        <strain>MGAS6180</strain>
    </source>
</reference>
<comment type="function">
    <text evidence="1">Component of the acetyl coenzyme A carboxylase (ACC) complex. Biotin carboxylase (BC) catalyzes the carboxylation of biotin on its carrier protein (BCCP) and then the CO(2) group is transferred by the transcarboxylase to acetyl-CoA to form malonyl-CoA.</text>
</comment>
<comment type="catalytic activity">
    <reaction evidence="1">
        <text>N(6)-carboxybiotinyl-L-lysyl-[protein] + acetyl-CoA = N(6)-biotinyl-L-lysyl-[protein] + malonyl-CoA</text>
        <dbReference type="Rhea" id="RHEA:54728"/>
        <dbReference type="Rhea" id="RHEA-COMP:10505"/>
        <dbReference type="Rhea" id="RHEA-COMP:10506"/>
        <dbReference type="ChEBI" id="CHEBI:57288"/>
        <dbReference type="ChEBI" id="CHEBI:57384"/>
        <dbReference type="ChEBI" id="CHEBI:83144"/>
        <dbReference type="ChEBI" id="CHEBI:83145"/>
        <dbReference type="EC" id="2.1.3.15"/>
    </reaction>
</comment>
<comment type="cofactor">
    <cofactor evidence="1">
        <name>Zn(2+)</name>
        <dbReference type="ChEBI" id="CHEBI:29105"/>
    </cofactor>
    <text evidence="1">Binds 1 zinc ion per subunit.</text>
</comment>
<comment type="pathway">
    <text evidence="1">Lipid metabolism; malonyl-CoA biosynthesis; malonyl-CoA from acetyl-CoA: step 1/1.</text>
</comment>
<comment type="subunit">
    <text evidence="1">Acetyl-CoA carboxylase is a heterohexamer composed of biotin carboxyl carrier protein (AccB), biotin carboxylase (AccC) and two subunits each of ACCase subunit alpha (AccA) and ACCase subunit beta (AccD).</text>
</comment>
<comment type="subcellular location">
    <subcellularLocation>
        <location evidence="1">Cytoplasm</location>
    </subcellularLocation>
</comment>
<comment type="similarity">
    <text evidence="1">Belongs to the AccD/PCCB family.</text>
</comment>
<evidence type="ECO:0000255" key="1">
    <source>
        <dbReference type="HAMAP-Rule" id="MF_01395"/>
    </source>
</evidence>
<evidence type="ECO:0000255" key="2">
    <source>
        <dbReference type="PROSITE-ProRule" id="PRU01136"/>
    </source>
</evidence>